<organism>
    <name type="scientific">Staphylococcus aureus</name>
    <dbReference type="NCBI Taxonomy" id="1280"/>
    <lineage>
        <taxon>Bacteria</taxon>
        <taxon>Bacillati</taxon>
        <taxon>Bacillota</taxon>
        <taxon>Bacilli</taxon>
        <taxon>Bacillales</taxon>
        <taxon>Staphylococcaceae</taxon>
        <taxon>Staphylococcus</taxon>
    </lineage>
</organism>
<feature type="chain" id="PRO_0000068322" description="Replication initiation protein">
    <location>
        <begin position="1"/>
        <end position="314"/>
    </location>
</feature>
<dbReference type="EMBL" id="J01764">
    <property type="protein sequence ID" value="AAA26033.1"/>
    <property type="molecule type" value="Genomic_DNA"/>
</dbReference>
<dbReference type="PIR" id="A03600">
    <property type="entry name" value="RQSACT"/>
</dbReference>
<dbReference type="RefSeq" id="NP_040469.1">
    <property type="nucleotide sequence ID" value="NC_001393.1"/>
</dbReference>
<dbReference type="RefSeq" id="NP_044359.1">
    <property type="nucleotide sequence ID" value="NC_001763.1"/>
</dbReference>
<dbReference type="RefSeq" id="WP_010889937.1">
    <property type="nucleotide sequence ID" value="NC_001393.1"/>
</dbReference>
<dbReference type="SMR" id="P03064"/>
<dbReference type="GO" id="GO:0006260">
    <property type="term" value="P:DNA replication"/>
    <property type="evidence" value="ECO:0007669"/>
    <property type="project" value="UniProtKB-KW"/>
</dbReference>
<dbReference type="InterPro" id="IPR003491">
    <property type="entry name" value="REP-like_C"/>
</dbReference>
<dbReference type="InterPro" id="IPR054456">
    <property type="entry name" value="RepD-like_N"/>
</dbReference>
<dbReference type="Pfam" id="PF02486">
    <property type="entry name" value="Rep_trans"/>
    <property type="match status" value="1"/>
</dbReference>
<dbReference type="Pfam" id="PF22477">
    <property type="entry name" value="RepD-like_N"/>
    <property type="match status" value="1"/>
</dbReference>
<comment type="function">
    <text>This protein is probably a specific topoisomerase involved in initiating replication. This protein is specifically required and may be rate-limiting for replication of the plasmid in vivo.</text>
</comment>
<comment type="miscellaneous">
    <text>The nicking site of REP proteins is sequence, but not plasmid, specific.</text>
</comment>
<comment type="similarity">
    <text evidence="1">Belongs to the plasmid replication initiation factor family.</text>
</comment>
<reference key="1">
    <citation type="journal article" date="1982" name="Proc. Natl. Acad. Sci. U.S.A.">
        <title>Coding sequence for the pT181 repC product: a plasmid-coded protein uniquely required for replication.</title>
        <authorList>
            <person name="Novick R.P."/>
            <person name="Adler G.K."/>
            <person name="Majumder S."/>
            <person name="Khan S.A."/>
            <person name="Carleton S."/>
            <person name="Rosenblum W.D."/>
            <person name="Iordanescu S."/>
        </authorList>
    </citation>
    <scope>NUCLEOTIDE SEQUENCE [GENOMIC DNA]</scope>
</reference>
<reference key="2">
    <citation type="journal article" date="1983" name="Plasmid">
        <title>Complete nucleotide sequence of pT181, a tetracycline-resistance plasmid from Staphylococcus aureus.</title>
        <authorList>
            <person name="Khan S.A."/>
            <person name="Novick R.P."/>
        </authorList>
    </citation>
    <scope>NUCLEOTIDE SEQUENCE [GENOMIC DNA]</scope>
</reference>
<evidence type="ECO:0000305" key="1"/>
<gene>
    <name type="primary">repC</name>
</gene>
<proteinExistence type="inferred from homology"/>
<accession>P03064</accession>
<name>REPC_STAAU</name>
<keyword id="KW-0235">DNA replication</keyword>
<keyword id="KW-0614">Plasmid</keyword>
<sequence>MYKNNHANHSNHLENHDLDNFSKTGYSNSRLDAHTVCISDPKLSFDAMTIVGNLNRDNAQALSKFMSVEPQIRLWDILQTKFKAKALQEKVYIEYDKVKADSWDRRNMRIEFNPNKLTRDEMIWLKQNIISYMEDDGFTRLDLAFDFEEDLSDYYAMSDKAVKKTIFYGRNGKPETKYFGVRDSNRFIRIYNKKQERKDNADAEVMSEHLWRVEIELKRDMVDYWNDCFSDLHILQPDWKTIQRTADRAIVFMLLSDEEEWGKLHRNSRTKYKNLIKEISPVDLTDLMKSTLKANEKQLQKQIDFWQHEFKFWK</sequence>
<protein>
    <recommendedName>
        <fullName>Replication initiation protein</fullName>
        <shortName>Protein A</shortName>
    </recommendedName>
</protein>
<geneLocation type="plasmid">
    <name>pT181</name>
</geneLocation>